<reference key="1">
    <citation type="journal article" date="2005" name="Proc. Natl. Acad. Sci. U.S.A.">
        <title>Complete genome sequence of the probiotic lactic acid bacterium Lactobacillus acidophilus NCFM.</title>
        <authorList>
            <person name="Altermann E."/>
            <person name="Russell W.M."/>
            <person name="Azcarate-Peril M.A."/>
            <person name="Barrangou R."/>
            <person name="Buck B.L."/>
            <person name="McAuliffe O."/>
            <person name="Souther N."/>
            <person name="Dobson A."/>
            <person name="Duong T."/>
            <person name="Callanan M."/>
            <person name="Lick S."/>
            <person name="Hamrick A."/>
            <person name="Cano R."/>
            <person name="Klaenhammer T.R."/>
        </authorList>
    </citation>
    <scope>NUCLEOTIDE SEQUENCE [LARGE SCALE GENOMIC DNA]</scope>
    <source>
        <strain>ATCC 700396 / NCK56 / N2 / NCFM</strain>
    </source>
</reference>
<dbReference type="EC" id="7.3.2.1" evidence="1"/>
<dbReference type="EMBL" id="CP000033">
    <property type="protein sequence ID" value="AAV42257.1"/>
    <property type="molecule type" value="Genomic_DNA"/>
</dbReference>
<dbReference type="RefSeq" id="YP_193288.1">
    <property type="nucleotide sequence ID" value="NC_006814.3"/>
</dbReference>
<dbReference type="SMR" id="Q5FM17"/>
<dbReference type="STRING" id="272621.LBA0365"/>
<dbReference type="KEGG" id="lac:LBA0365"/>
<dbReference type="PATRIC" id="fig|272621.13.peg.352"/>
<dbReference type="eggNOG" id="COG1117">
    <property type="taxonomic scope" value="Bacteria"/>
</dbReference>
<dbReference type="HOGENOM" id="CLU_000604_1_22_9"/>
<dbReference type="OrthoDB" id="9802185at2"/>
<dbReference type="BioCyc" id="LACI272621:G1G49-360-MONOMER"/>
<dbReference type="Proteomes" id="UP000006381">
    <property type="component" value="Chromosome"/>
</dbReference>
<dbReference type="GO" id="GO:0005886">
    <property type="term" value="C:plasma membrane"/>
    <property type="evidence" value="ECO:0007669"/>
    <property type="project" value="UniProtKB-SubCell"/>
</dbReference>
<dbReference type="GO" id="GO:0005524">
    <property type="term" value="F:ATP binding"/>
    <property type="evidence" value="ECO:0007669"/>
    <property type="project" value="UniProtKB-KW"/>
</dbReference>
<dbReference type="GO" id="GO:0016887">
    <property type="term" value="F:ATP hydrolysis activity"/>
    <property type="evidence" value="ECO:0007669"/>
    <property type="project" value="InterPro"/>
</dbReference>
<dbReference type="GO" id="GO:0015415">
    <property type="term" value="F:ATPase-coupled phosphate ion transmembrane transporter activity"/>
    <property type="evidence" value="ECO:0007669"/>
    <property type="project" value="UniProtKB-EC"/>
</dbReference>
<dbReference type="GO" id="GO:0035435">
    <property type="term" value="P:phosphate ion transmembrane transport"/>
    <property type="evidence" value="ECO:0007669"/>
    <property type="project" value="InterPro"/>
</dbReference>
<dbReference type="CDD" id="cd03260">
    <property type="entry name" value="ABC_PstB_phosphate_transporter"/>
    <property type="match status" value="1"/>
</dbReference>
<dbReference type="Gene3D" id="3.40.50.300">
    <property type="entry name" value="P-loop containing nucleotide triphosphate hydrolases"/>
    <property type="match status" value="1"/>
</dbReference>
<dbReference type="InterPro" id="IPR003593">
    <property type="entry name" value="AAA+_ATPase"/>
</dbReference>
<dbReference type="InterPro" id="IPR003439">
    <property type="entry name" value="ABC_transporter-like_ATP-bd"/>
</dbReference>
<dbReference type="InterPro" id="IPR017871">
    <property type="entry name" value="ABC_transporter-like_CS"/>
</dbReference>
<dbReference type="InterPro" id="IPR027417">
    <property type="entry name" value="P-loop_NTPase"/>
</dbReference>
<dbReference type="InterPro" id="IPR005670">
    <property type="entry name" value="PstB-like"/>
</dbReference>
<dbReference type="NCBIfam" id="TIGR00972">
    <property type="entry name" value="3a0107s01c2"/>
    <property type="match status" value="1"/>
</dbReference>
<dbReference type="PANTHER" id="PTHR43423">
    <property type="entry name" value="ABC TRANSPORTER I FAMILY MEMBER 17"/>
    <property type="match status" value="1"/>
</dbReference>
<dbReference type="PANTHER" id="PTHR43423:SF1">
    <property type="entry name" value="ABC TRANSPORTER I FAMILY MEMBER 17"/>
    <property type="match status" value="1"/>
</dbReference>
<dbReference type="Pfam" id="PF00005">
    <property type="entry name" value="ABC_tran"/>
    <property type="match status" value="1"/>
</dbReference>
<dbReference type="SMART" id="SM00382">
    <property type="entry name" value="AAA"/>
    <property type="match status" value="1"/>
</dbReference>
<dbReference type="SUPFAM" id="SSF52540">
    <property type="entry name" value="P-loop containing nucleoside triphosphate hydrolases"/>
    <property type="match status" value="1"/>
</dbReference>
<dbReference type="PROSITE" id="PS00211">
    <property type="entry name" value="ABC_TRANSPORTER_1"/>
    <property type="match status" value="1"/>
</dbReference>
<dbReference type="PROSITE" id="PS50893">
    <property type="entry name" value="ABC_TRANSPORTER_2"/>
    <property type="match status" value="1"/>
</dbReference>
<dbReference type="PROSITE" id="PS51238">
    <property type="entry name" value="PSTB"/>
    <property type="match status" value="1"/>
</dbReference>
<feature type="chain" id="PRO_0000272465" description="Phosphate import ATP-binding protein PstB 2">
    <location>
        <begin position="1"/>
        <end position="251"/>
    </location>
</feature>
<feature type="domain" description="ABC transporter" evidence="1">
    <location>
        <begin position="5"/>
        <end position="246"/>
    </location>
</feature>
<feature type="binding site" evidence="1">
    <location>
        <begin position="37"/>
        <end position="44"/>
    </location>
    <ligand>
        <name>ATP</name>
        <dbReference type="ChEBI" id="CHEBI:30616"/>
    </ligand>
</feature>
<evidence type="ECO:0000255" key="1">
    <source>
        <dbReference type="HAMAP-Rule" id="MF_01702"/>
    </source>
</evidence>
<comment type="function">
    <text evidence="1">Part of the ABC transporter complex PstSACB involved in phosphate import. Responsible for energy coupling to the transport system.</text>
</comment>
<comment type="catalytic activity">
    <reaction evidence="1">
        <text>phosphate(out) + ATP + H2O = ADP + 2 phosphate(in) + H(+)</text>
        <dbReference type="Rhea" id="RHEA:24440"/>
        <dbReference type="ChEBI" id="CHEBI:15377"/>
        <dbReference type="ChEBI" id="CHEBI:15378"/>
        <dbReference type="ChEBI" id="CHEBI:30616"/>
        <dbReference type="ChEBI" id="CHEBI:43474"/>
        <dbReference type="ChEBI" id="CHEBI:456216"/>
        <dbReference type="EC" id="7.3.2.1"/>
    </reaction>
</comment>
<comment type="subunit">
    <text evidence="1">The complex is composed of two ATP-binding proteins (PstB), two transmembrane proteins (PstC and PstA) and a solute-binding protein (PstS).</text>
</comment>
<comment type="subcellular location">
    <subcellularLocation>
        <location evidence="1">Cell membrane</location>
        <topology evidence="1">Peripheral membrane protein</topology>
    </subcellularLocation>
</comment>
<comment type="similarity">
    <text evidence="1">Belongs to the ABC transporter superfamily. Phosphate importer (TC 3.A.1.7) family.</text>
</comment>
<protein>
    <recommendedName>
        <fullName evidence="1">Phosphate import ATP-binding protein PstB 2</fullName>
        <ecNumber evidence="1">7.3.2.1</ecNumber>
    </recommendedName>
    <alternativeName>
        <fullName evidence="1">ABC phosphate transporter 2</fullName>
    </alternativeName>
    <alternativeName>
        <fullName evidence="1">Phosphate-transporting ATPase 2</fullName>
    </alternativeName>
</protein>
<organism>
    <name type="scientific">Lactobacillus acidophilus (strain ATCC 700396 / NCK56 / N2 / NCFM)</name>
    <dbReference type="NCBI Taxonomy" id="272621"/>
    <lineage>
        <taxon>Bacteria</taxon>
        <taxon>Bacillati</taxon>
        <taxon>Bacillota</taxon>
        <taxon>Bacilli</taxon>
        <taxon>Lactobacillales</taxon>
        <taxon>Lactobacillaceae</taxon>
        <taxon>Lactobacillus</taxon>
    </lineage>
</organism>
<sequence length="251" mass="28052">MKTIISAKDVHLSYGDYEALHGINLNFKEKELTALIGPSGCGKSTFLRCLNRMNDDIENIKITGEIKFEGQDIYGSKMDLVALRKNVGMVFQQPTPFPFSVYDNVAYGLKIAGVKDKELIDQRVEESLKQAAIWKETKDNLNRNAQAFSGGQQQRICIARALAIRPKVVLLDEPTSALDPISSSEIEETLMDLKHQYTFIMVTHNLQQAGRVSDQTAFLMNGDLVEAGPTEEMFIAPKKQITSDYLNGRFG</sequence>
<name>PSTB2_LACAC</name>
<keyword id="KW-0067">ATP-binding</keyword>
<keyword id="KW-1003">Cell membrane</keyword>
<keyword id="KW-0472">Membrane</keyword>
<keyword id="KW-0547">Nucleotide-binding</keyword>
<keyword id="KW-0592">Phosphate transport</keyword>
<keyword id="KW-1185">Reference proteome</keyword>
<keyword id="KW-1278">Translocase</keyword>
<keyword id="KW-0813">Transport</keyword>
<proteinExistence type="inferred from homology"/>
<gene>
    <name evidence="1" type="primary">pstB2</name>
    <name type="ordered locus">LBA0365</name>
</gene>
<accession>Q5FM17</accession>